<gene>
    <name evidence="1" type="primary">rplI</name>
    <name type="ordered locus">lpg1589</name>
</gene>
<organism>
    <name type="scientific">Legionella pneumophila subsp. pneumophila (strain Philadelphia 1 / ATCC 33152 / DSM 7513)</name>
    <dbReference type="NCBI Taxonomy" id="272624"/>
    <lineage>
        <taxon>Bacteria</taxon>
        <taxon>Pseudomonadati</taxon>
        <taxon>Pseudomonadota</taxon>
        <taxon>Gammaproteobacteria</taxon>
        <taxon>Legionellales</taxon>
        <taxon>Legionellaceae</taxon>
        <taxon>Legionella</taxon>
    </lineage>
</organism>
<name>RL9_LEGPH</name>
<evidence type="ECO:0000255" key="1">
    <source>
        <dbReference type="HAMAP-Rule" id="MF_00503"/>
    </source>
</evidence>
<evidence type="ECO:0000305" key="2"/>
<dbReference type="EMBL" id="AE017354">
    <property type="protein sequence ID" value="AAU27671.1"/>
    <property type="molecule type" value="Genomic_DNA"/>
</dbReference>
<dbReference type="RefSeq" id="WP_010947318.1">
    <property type="nucleotide sequence ID" value="NC_002942.5"/>
</dbReference>
<dbReference type="RefSeq" id="YP_095618.1">
    <property type="nucleotide sequence ID" value="NC_002942.5"/>
</dbReference>
<dbReference type="SMR" id="Q5ZV51"/>
<dbReference type="STRING" id="272624.lpg1589"/>
<dbReference type="PaxDb" id="272624-lpg1589"/>
<dbReference type="GeneID" id="57035580"/>
<dbReference type="KEGG" id="lpn:lpg1589"/>
<dbReference type="PATRIC" id="fig|272624.6.peg.1665"/>
<dbReference type="eggNOG" id="COG0359">
    <property type="taxonomic scope" value="Bacteria"/>
</dbReference>
<dbReference type="HOGENOM" id="CLU_078938_4_1_6"/>
<dbReference type="OrthoDB" id="9788336at2"/>
<dbReference type="Proteomes" id="UP000000609">
    <property type="component" value="Chromosome"/>
</dbReference>
<dbReference type="GO" id="GO:1990904">
    <property type="term" value="C:ribonucleoprotein complex"/>
    <property type="evidence" value="ECO:0007669"/>
    <property type="project" value="UniProtKB-KW"/>
</dbReference>
<dbReference type="GO" id="GO:0005840">
    <property type="term" value="C:ribosome"/>
    <property type="evidence" value="ECO:0007669"/>
    <property type="project" value="UniProtKB-KW"/>
</dbReference>
<dbReference type="GO" id="GO:0019843">
    <property type="term" value="F:rRNA binding"/>
    <property type="evidence" value="ECO:0007669"/>
    <property type="project" value="UniProtKB-UniRule"/>
</dbReference>
<dbReference type="GO" id="GO:0003735">
    <property type="term" value="F:structural constituent of ribosome"/>
    <property type="evidence" value="ECO:0007669"/>
    <property type="project" value="InterPro"/>
</dbReference>
<dbReference type="GO" id="GO:0006412">
    <property type="term" value="P:translation"/>
    <property type="evidence" value="ECO:0007669"/>
    <property type="project" value="UniProtKB-UniRule"/>
</dbReference>
<dbReference type="Gene3D" id="3.10.430.100">
    <property type="entry name" value="Ribosomal protein L9, C-terminal domain"/>
    <property type="match status" value="1"/>
</dbReference>
<dbReference type="Gene3D" id="3.40.5.10">
    <property type="entry name" value="Ribosomal protein L9, N-terminal domain"/>
    <property type="match status" value="1"/>
</dbReference>
<dbReference type="HAMAP" id="MF_00503">
    <property type="entry name" value="Ribosomal_bL9"/>
    <property type="match status" value="1"/>
</dbReference>
<dbReference type="InterPro" id="IPR000244">
    <property type="entry name" value="Ribosomal_bL9"/>
</dbReference>
<dbReference type="InterPro" id="IPR009027">
    <property type="entry name" value="Ribosomal_bL9/RNase_H1_N"/>
</dbReference>
<dbReference type="InterPro" id="IPR020594">
    <property type="entry name" value="Ribosomal_bL9_bac/chp"/>
</dbReference>
<dbReference type="InterPro" id="IPR020069">
    <property type="entry name" value="Ribosomal_bL9_C"/>
</dbReference>
<dbReference type="InterPro" id="IPR036791">
    <property type="entry name" value="Ribosomal_bL9_C_sf"/>
</dbReference>
<dbReference type="InterPro" id="IPR020070">
    <property type="entry name" value="Ribosomal_bL9_N"/>
</dbReference>
<dbReference type="InterPro" id="IPR036935">
    <property type="entry name" value="Ribosomal_bL9_N_sf"/>
</dbReference>
<dbReference type="NCBIfam" id="TIGR00158">
    <property type="entry name" value="L9"/>
    <property type="match status" value="1"/>
</dbReference>
<dbReference type="PANTHER" id="PTHR21368">
    <property type="entry name" value="50S RIBOSOMAL PROTEIN L9"/>
    <property type="match status" value="1"/>
</dbReference>
<dbReference type="Pfam" id="PF03948">
    <property type="entry name" value="Ribosomal_L9_C"/>
    <property type="match status" value="1"/>
</dbReference>
<dbReference type="Pfam" id="PF01281">
    <property type="entry name" value="Ribosomal_L9_N"/>
    <property type="match status" value="1"/>
</dbReference>
<dbReference type="SUPFAM" id="SSF55658">
    <property type="entry name" value="L9 N-domain-like"/>
    <property type="match status" value="1"/>
</dbReference>
<dbReference type="SUPFAM" id="SSF55653">
    <property type="entry name" value="Ribosomal protein L9 C-domain"/>
    <property type="match status" value="1"/>
</dbReference>
<dbReference type="PROSITE" id="PS00651">
    <property type="entry name" value="RIBOSOMAL_L9"/>
    <property type="match status" value="1"/>
</dbReference>
<keyword id="KW-1185">Reference proteome</keyword>
<keyword id="KW-0687">Ribonucleoprotein</keyword>
<keyword id="KW-0689">Ribosomal protein</keyword>
<keyword id="KW-0694">RNA-binding</keyword>
<keyword id="KW-0699">rRNA-binding</keyword>
<feature type="chain" id="PRO_0000236539" description="Large ribosomal subunit protein bL9">
    <location>
        <begin position="1"/>
        <end position="149"/>
    </location>
</feature>
<sequence>MEVILLEKVRNLGNLGDKVHVKSGYGRNYLIPQNKAVFATEQNIELFEKRRAELEKKAQQALANAEQRAAKLNDTTIVISAMASDEGKLYGSVGVNEIKDALIEKQIEISKREIVMPEGPLHSIGNYVVEVHVHSDVVANLQVEIIPAK</sequence>
<comment type="function">
    <text evidence="1">Binds to the 23S rRNA.</text>
</comment>
<comment type="similarity">
    <text evidence="1">Belongs to the bacterial ribosomal protein bL9 family.</text>
</comment>
<protein>
    <recommendedName>
        <fullName evidence="1">Large ribosomal subunit protein bL9</fullName>
    </recommendedName>
    <alternativeName>
        <fullName evidence="2">50S ribosomal protein L9</fullName>
    </alternativeName>
</protein>
<reference key="1">
    <citation type="journal article" date="2004" name="Science">
        <title>The genomic sequence of the accidental pathogen Legionella pneumophila.</title>
        <authorList>
            <person name="Chien M."/>
            <person name="Morozova I."/>
            <person name="Shi S."/>
            <person name="Sheng H."/>
            <person name="Chen J."/>
            <person name="Gomez S.M."/>
            <person name="Asamani G."/>
            <person name="Hill K."/>
            <person name="Nuara J."/>
            <person name="Feder M."/>
            <person name="Rineer J."/>
            <person name="Greenberg J.J."/>
            <person name="Steshenko V."/>
            <person name="Park S.H."/>
            <person name="Zhao B."/>
            <person name="Teplitskaya E."/>
            <person name="Edwards J.R."/>
            <person name="Pampou S."/>
            <person name="Georghiou A."/>
            <person name="Chou I.-C."/>
            <person name="Iannuccilli W."/>
            <person name="Ulz M.E."/>
            <person name="Kim D.H."/>
            <person name="Geringer-Sameth A."/>
            <person name="Goldsberry C."/>
            <person name="Morozov P."/>
            <person name="Fischer S.G."/>
            <person name="Segal G."/>
            <person name="Qu X."/>
            <person name="Rzhetsky A."/>
            <person name="Zhang P."/>
            <person name="Cayanis E."/>
            <person name="De Jong P.J."/>
            <person name="Ju J."/>
            <person name="Kalachikov S."/>
            <person name="Shuman H.A."/>
            <person name="Russo J.J."/>
        </authorList>
    </citation>
    <scope>NUCLEOTIDE SEQUENCE [LARGE SCALE GENOMIC DNA]</scope>
    <source>
        <strain>Philadelphia 1 / ATCC 33152 / DSM 7513</strain>
    </source>
</reference>
<accession>Q5ZV51</accession>
<proteinExistence type="inferred from homology"/>